<keyword id="KW-0028">Amino-acid biosynthesis</keyword>
<keyword id="KW-0057">Aromatic amino acid biosynthesis</keyword>
<keyword id="KW-0520">NAD</keyword>
<keyword id="KW-0521">NADP</keyword>
<keyword id="KW-0560">Oxidoreductase</keyword>
<keyword id="KW-1185">Reference proteome</keyword>
<gene>
    <name evidence="1" type="primary">ydiB</name>
    <name type="ordered locus">SSON_1462</name>
</gene>
<comment type="function">
    <text evidence="1">The actual biological function of YdiB remains unclear, nor is it known whether 3-dehydroshikimate or quinate represents the natural substrate. Catalyzes the reversible NAD-dependent reduction of both 3-dehydroshikimate (DHSA) and 3-dehydroquinate to yield shikimate (SA) and quinate, respectively. It can use both NAD or NADP for catalysis, however it has higher catalytic efficiency with NAD.</text>
</comment>
<comment type="catalytic activity">
    <reaction evidence="1">
        <text>L-quinate + NAD(+) = 3-dehydroquinate + NADH + H(+)</text>
        <dbReference type="Rhea" id="RHEA:22364"/>
        <dbReference type="ChEBI" id="CHEBI:15378"/>
        <dbReference type="ChEBI" id="CHEBI:29751"/>
        <dbReference type="ChEBI" id="CHEBI:32364"/>
        <dbReference type="ChEBI" id="CHEBI:57540"/>
        <dbReference type="ChEBI" id="CHEBI:57945"/>
        <dbReference type="EC" id="1.1.1.282"/>
    </reaction>
</comment>
<comment type="catalytic activity">
    <reaction evidence="1">
        <text>L-quinate + NADP(+) = 3-dehydroquinate + NADPH + H(+)</text>
        <dbReference type="Rhea" id="RHEA:18425"/>
        <dbReference type="ChEBI" id="CHEBI:15378"/>
        <dbReference type="ChEBI" id="CHEBI:29751"/>
        <dbReference type="ChEBI" id="CHEBI:32364"/>
        <dbReference type="ChEBI" id="CHEBI:57783"/>
        <dbReference type="ChEBI" id="CHEBI:58349"/>
        <dbReference type="EC" id="1.1.1.282"/>
    </reaction>
</comment>
<comment type="catalytic activity">
    <reaction evidence="1">
        <text>shikimate + NADP(+) = 3-dehydroshikimate + NADPH + H(+)</text>
        <dbReference type="Rhea" id="RHEA:17737"/>
        <dbReference type="ChEBI" id="CHEBI:15378"/>
        <dbReference type="ChEBI" id="CHEBI:16630"/>
        <dbReference type="ChEBI" id="CHEBI:36208"/>
        <dbReference type="ChEBI" id="CHEBI:57783"/>
        <dbReference type="ChEBI" id="CHEBI:58349"/>
        <dbReference type="EC" id="1.1.1.282"/>
    </reaction>
</comment>
<comment type="catalytic activity">
    <reaction evidence="1">
        <text>shikimate + NAD(+) = 3-dehydroshikimate + NADH + H(+)</text>
        <dbReference type="Rhea" id="RHEA:17741"/>
        <dbReference type="ChEBI" id="CHEBI:15378"/>
        <dbReference type="ChEBI" id="CHEBI:16630"/>
        <dbReference type="ChEBI" id="CHEBI:36208"/>
        <dbReference type="ChEBI" id="CHEBI:57540"/>
        <dbReference type="ChEBI" id="CHEBI:57945"/>
        <dbReference type="EC" id="1.1.1.282"/>
    </reaction>
</comment>
<comment type="pathway">
    <text evidence="1">Metabolic intermediate biosynthesis; chorismate biosynthesis; chorismate from D-erythrose 4-phosphate and phosphoenolpyruvate: step 4/7.</text>
</comment>
<comment type="subunit">
    <text evidence="1">Homodimer.</text>
</comment>
<comment type="similarity">
    <text evidence="1">Belongs to the shikimate dehydrogenase family.</text>
</comment>
<reference key="1">
    <citation type="journal article" date="2005" name="Nucleic Acids Res.">
        <title>Genome dynamics and diversity of Shigella species, the etiologic agents of bacillary dysentery.</title>
        <authorList>
            <person name="Yang F."/>
            <person name="Yang J."/>
            <person name="Zhang X."/>
            <person name="Chen L."/>
            <person name="Jiang Y."/>
            <person name="Yan Y."/>
            <person name="Tang X."/>
            <person name="Wang J."/>
            <person name="Xiong Z."/>
            <person name="Dong J."/>
            <person name="Xue Y."/>
            <person name="Zhu Y."/>
            <person name="Xu X."/>
            <person name="Sun L."/>
            <person name="Chen S."/>
            <person name="Nie H."/>
            <person name="Peng J."/>
            <person name="Xu J."/>
            <person name="Wang Y."/>
            <person name="Yuan Z."/>
            <person name="Wen Y."/>
            <person name="Yao Z."/>
            <person name="Shen Y."/>
            <person name="Qiang B."/>
            <person name="Hou Y."/>
            <person name="Yu J."/>
            <person name="Jin Q."/>
        </authorList>
    </citation>
    <scope>NUCLEOTIDE SEQUENCE [LARGE SCALE GENOMIC DNA]</scope>
    <source>
        <strain>Ss046</strain>
    </source>
</reference>
<feature type="chain" id="PRO_0000280779" description="Quinate/shikimate dehydrogenase">
    <location>
        <begin position="1"/>
        <end position="288"/>
    </location>
</feature>
<feature type="binding site" evidence="1">
    <location>
        <position position="71"/>
    </location>
    <ligand>
        <name>substrate</name>
    </ligand>
</feature>
<feature type="binding site" evidence="1">
    <location>
        <position position="107"/>
    </location>
    <ligand>
        <name>substrate</name>
    </ligand>
</feature>
<feature type="binding site" evidence="1">
    <location>
        <begin position="132"/>
        <end position="135"/>
    </location>
    <ligand>
        <name>NAD(+)</name>
        <dbReference type="ChEBI" id="CHEBI:57540"/>
    </ligand>
</feature>
<feature type="binding site" evidence="1">
    <location>
        <begin position="155"/>
        <end position="158"/>
    </location>
    <ligand>
        <name>NAD(+)</name>
        <dbReference type="ChEBI" id="CHEBI:57540"/>
    </ligand>
</feature>
<feature type="binding site" evidence="1">
    <location>
        <position position="205"/>
    </location>
    <ligand>
        <name>NAD(+)</name>
        <dbReference type="ChEBI" id="CHEBI:57540"/>
    </ligand>
</feature>
<feature type="binding site" evidence="1">
    <location>
        <begin position="232"/>
        <end position="235"/>
    </location>
    <ligand>
        <name>NAD(+)</name>
        <dbReference type="ChEBI" id="CHEBI:57540"/>
    </ligand>
</feature>
<feature type="binding site" evidence="1">
    <location>
        <position position="255"/>
    </location>
    <ligand>
        <name>NAD(+)</name>
        <dbReference type="ChEBI" id="CHEBI:57540"/>
    </ligand>
</feature>
<name>YDIB_SHISS</name>
<dbReference type="EC" id="1.1.1.282" evidence="1"/>
<dbReference type="EMBL" id="CP000038">
    <property type="protein sequence ID" value="AAZ88166.1"/>
    <property type="molecule type" value="Genomic_DNA"/>
</dbReference>
<dbReference type="RefSeq" id="WP_000383476.1">
    <property type="nucleotide sequence ID" value="NC_007384.1"/>
</dbReference>
<dbReference type="SMR" id="Q3Z246"/>
<dbReference type="GeneID" id="93775849"/>
<dbReference type="KEGG" id="ssn:SSON_1462"/>
<dbReference type="HOGENOM" id="CLU_044063_4_4_6"/>
<dbReference type="UniPathway" id="UPA00053">
    <property type="reaction ID" value="UER00087"/>
</dbReference>
<dbReference type="Proteomes" id="UP000002529">
    <property type="component" value="Chromosome"/>
</dbReference>
<dbReference type="GO" id="GO:0030266">
    <property type="term" value="F:quinate 3-dehydrogenase (NAD+) activity"/>
    <property type="evidence" value="ECO:0007669"/>
    <property type="project" value="UniProtKB-UniRule"/>
</dbReference>
<dbReference type="GO" id="GO:0052733">
    <property type="term" value="F:quinate 3-dehydrogenase (NADP+) activity"/>
    <property type="evidence" value="ECO:0007669"/>
    <property type="project" value="InterPro"/>
</dbReference>
<dbReference type="GO" id="GO:0052734">
    <property type="term" value="F:shikimate 3-dehydrogenase (NAD+) activity"/>
    <property type="evidence" value="ECO:0007669"/>
    <property type="project" value="InterPro"/>
</dbReference>
<dbReference type="GO" id="GO:0004764">
    <property type="term" value="F:shikimate 3-dehydrogenase (NADP+) activity"/>
    <property type="evidence" value="ECO:0007669"/>
    <property type="project" value="UniProtKB-UniRule"/>
</dbReference>
<dbReference type="GO" id="GO:0008652">
    <property type="term" value="P:amino acid biosynthetic process"/>
    <property type="evidence" value="ECO:0007669"/>
    <property type="project" value="UniProtKB-KW"/>
</dbReference>
<dbReference type="GO" id="GO:0009073">
    <property type="term" value="P:aromatic amino acid family biosynthetic process"/>
    <property type="evidence" value="ECO:0007669"/>
    <property type="project" value="UniProtKB-KW"/>
</dbReference>
<dbReference type="GO" id="GO:0009423">
    <property type="term" value="P:chorismate biosynthetic process"/>
    <property type="evidence" value="ECO:0007669"/>
    <property type="project" value="UniProtKB-UniRule"/>
</dbReference>
<dbReference type="GO" id="GO:0019632">
    <property type="term" value="P:shikimate metabolic process"/>
    <property type="evidence" value="ECO:0007669"/>
    <property type="project" value="TreeGrafter"/>
</dbReference>
<dbReference type="CDD" id="cd01065">
    <property type="entry name" value="NAD_bind_Shikimate_DH"/>
    <property type="match status" value="1"/>
</dbReference>
<dbReference type="FunFam" id="3.40.50.10860:FF:000004">
    <property type="entry name" value="Quinate/shikimate dehydrogenase"/>
    <property type="match status" value="1"/>
</dbReference>
<dbReference type="FunFam" id="3.40.50.720:FF:000086">
    <property type="entry name" value="Quinate/shikimate dehydrogenase"/>
    <property type="match status" value="1"/>
</dbReference>
<dbReference type="Gene3D" id="3.40.50.10860">
    <property type="entry name" value="Leucine Dehydrogenase, chain A, domain 1"/>
    <property type="match status" value="1"/>
</dbReference>
<dbReference type="Gene3D" id="3.40.50.720">
    <property type="entry name" value="NAD(P)-binding Rossmann-like Domain"/>
    <property type="match status" value="1"/>
</dbReference>
<dbReference type="HAMAP" id="MF_00222">
    <property type="entry name" value="Shikimate_DH_AroE"/>
    <property type="match status" value="1"/>
</dbReference>
<dbReference type="HAMAP" id="MF_01578">
    <property type="entry name" value="Shikimate_DH_YdiB"/>
    <property type="match status" value="1"/>
</dbReference>
<dbReference type="InterPro" id="IPR046346">
    <property type="entry name" value="Aminoacid_DH-like_N_sf"/>
</dbReference>
<dbReference type="InterPro" id="IPR036291">
    <property type="entry name" value="NAD(P)-bd_dom_sf"/>
</dbReference>
<dbReference type="InterPro" id="IPR022872">
    <property type="entry name" value="Quinate/Shikimate_DH"/>
</dbReference>
<dbReference type="InterPro" id="IPR041121">
    <property type="entry name" value="SDH_C"/>
</dbReference>
<dbReference type="InterPro" id="IPR013708">
    <property type="entry name" value="Shikimate_DH-bd_N"/>
</dbReference>
<dbReference type="InterPro" id="IPR022893">
    <property type="entry name" value="Shikimate_DH_fam"/>
</dbReference>
<dbReference type="NCBIfam" id="NF009390">
    <property type="entry name" value="PRK12749.1"/>
    <property type="match status" value="1"/>
</dbReference>
<dbReference type="PANTHER" id="PTHR21089:SF1">
    <property type="entry name" value="BIFUNCTIONAL 3-DEHYDROQUINATE DEHYDRATASE_SHIKIMATE DEHYDROGENASE, CHLOROPLASTIC"/>
    <property type="match status" value="1"/>
</dbReference>
<dbReference type="PANTHER" id="PTHR21089">
    <property type="entry name" value="SHIKIMATE DEHYDROGENASE"/>
    <property type="match status" value="1"/>
</dbReference>
<dbReference type="Pfam" id="PF18317">
    <property type="entry name" value="SDH_C"/>
    <property type="match status" value="1"/>
</dbReference>
<dbReference type="Pfam" id="PF08501">
    <property type="entry name" value="Shikimate_dh_N"/>
    <property type="match status" value="1"/>
</dbReference>
<dbReference type="SUPFAM" id="SSF53223">
    <property type="entry name" value="Aminoacid dehydrogenase-like, N-terminal domain"/>
    <property type="match status" value="1"/>
</dbReference>
<dbReference type="SUPFAM" id="SSF51735">
    <property type="entry name" value="NAD(P)-binding Rossmann-fold domains"/>
    <property type="match status" value="1"/>
</dbReference>
<protein>
    <recommendedName>
        <fullName evidence="1">Quinate/shikimate dehydrogenase</fullName>
        <ecNumber evidence="1">1.1.1.282</ecNumber>
    </recommendedName>
    <alternativeName>
        <fullName evidence="1">NAD-dependent shikimate 5-dehydrogenase</fullName>
    </alternativeName>
</protein>
<proteinExistence type="inferred from homology"/>
<organism>
    <name type="scientific">Shigella sonnei (strain Ss046)</name>
    <dbReference type="NCBI Taxonomy" id="300269"/>
    <lineage>
        <taxon>Bacteria</taxon>
        <taxon>Pseudomonadati</taxon>
        <taxon>Pseudomonadota</taxon>
        <taxon>Gammaproteobacteria</taxon>
        <taxon>Enterobacterales</taxon>
        <taxon>Enterobacteriaceae</taxon>
        <taxon>Shigella</taxon>
    </lineage>
</organism>
<accession>Q3Z246</accession>
<sequence length="288" mass="31242">MDVTAKYELIGLMAYPIRHSLSPEMQNKALEKAGLPFTYMAFEVDNDSFPGAIEGLKALKMRGTGVSMPNKQLACEYVDELTPAAKLVGAINTIVNDDGYLRGYNTDGTGHIRAIKESGFDIKGKTMVLLGAGGASTAIGAQGAIEGLKEIKLFNRRDEFFDKALAFAQRVNENTDCVVTVTDLADQQAFAEVLASADILTNGTKVGMNPLENESLVNDISLLHPGLLVTECVYNPHMTKLLQQAQQAGCKTIDGYGMLLWQGAEQFTLWTGKDFPLEYVKQVMGFGA</sequence>
<evidence type="ECO:0000255" key="1">
    <source>
        <dbReference type="HAMAP-Rule" id="MF_01578"/>
    </source>
</evidence>